<protein>
    <recommendedName>
        <fullName>Pyrophosphate-energized proton pump 2</fullName>
        <ecNumber>7.1.3.1</ecNumber>
    </recommendedName>
    <alternativeName>
        <fullName>Membrane-bound proton-translocating pyrophosphatase 2</fullName>
    </alternativeName>
    <alternativeName>
        <fullName>Pyrophosphate-energized inorganic pyrophosphatase 2</fullName>
        <shortName>H(+)-PPase 2</shortName>
    </alternativeName>
</protein>
<dbReference type="EC" id="7.1.3.1"/>
<dbReference type="EMBL" id="AH011148">
    <property type="protein sequence ID" value="AAL14975.1"/>
    <property type="molecule type" value="Genomic_DNA"/>
</dbReference>
<dbReference type="SMR" id="Q93AS1"/>
<dbReference type="GO" id="GO:0005886">
    <property type="term" value="C:plasma membrane"/>
    <property type="evidence" value="ECO:0007669"/>
    <property type="project" value="UniProtKB-SubCell"/>
</dbReference>
<dbReference type="GO" id="GO:0009678">
    <property type="term" value="F:diphosphate hydrolysis-driven proton transmembrane transporter activity"/>
    <property type="evidence" value="ECO:0007669"/>
    <property type="project" value="UniProtKB-EC"/>
</dbReference>
<dbReference type="GO" id="GO:0004427">
    <property type="term" value="F:inorganic diphosphate phosphatase activity"/>
    <property type="evidence" value="ECO:0007669"/>
    <property type="project" value="InterPro"/>
</dbReference>
<dbReference type="InterPro" id="IPR004131">
    <property type="entry name" value="PPase-energised_H-pump"/>
</dbReference>
<dbReference type="PANTHER" id="PTHR31998">
    <property type="entry name" value="K(+)-INSENSITIVE PYROPHOSPHATE-ENERGIZED PROTON PUMP"/>
    <property type="match status" value="1"/>
</dbReference>
<dbReference type="Pfam" id="PF03030">
    <property type="entry name" value="H_PPase"/>
    <property type="match status" value="1"/>
</dbReference>
<feature type="chain" id="PRO_0000217026" description="Pyrophosphate-energized proton pump 2">
    <location>
        <begin position="1" status="less than"/>
        <end position="215" status="greater than"/>
    </location>
</feature>
<feature type="transmembrane region" description="Helical" evidence="2">
    <location>
        <begin position="16"/>
        <end position="36"/>
    </location>
</feature>
<feature type="transmembrane region" description="Helical" evidence="2">
    <location>
        <begin position="51"/>
        <end position="71"/>
    </location>
</feature>
<feature type="transmembrane region" description="Helical" evidence="2">
    <location>
        <begin position="86"/>
        <end position="106"/>
    </location>
</feature>
<feature type="transmembrane region" description="Helical" evidence="2">
    <location>
        <begin position="136"/>
        <end position="156"/>
    </location>
</feature>
<feature type="transmembrane region" description="Helical" evidence="2">
    <location>
        <begin position="164"/>
        <end position="184"/>
    </location>
</feature>
<feature type="non-terminal residue">
    <location>
        <position position="1"/>
    </location>
</feature>
<feature type="non-terminal residue">
    <location>
        <position position="215"/>
    </location>
</feature>
<proteinExistence type="inferred from homology"/>
<accession>Q93AS1</accession>
<keyword id="KW-0997">Cell inner membrane</keyword>
<keyword id="KW-1003">Cell membrane</keyword>
<keyword id="KW-0375">Hydrogen ion transport</keyword>
<keyword id="KW-0406">Ion transport</keyword>
<keyword id="KW-0460">Magnesium</keyword>
<keyword id="KW-0472">Membrane</keyword>
<keyword id="KW-1278">Translocase</keyword>
<keyword id="KW-0812">Transmembrane</keyword>
<keyword id="KW-1133">Transmembrane helix</keyword>
<keyword id="KW-0813">Transport</keyword>
<reference key="1">
    <citation type="submission" date="2001-09" db="EMBL/GenBank/DDBJ databases">
        <title>High prevalence of the H+-proton-pumping inorganic pyrophosphatase gene in alpha proteobacteria and evidence of lateral transfer in its phylogeny.</title>
        <authorList>
            <person name="Jumas-Bilak E."/>
            <person name="Michaux-Charachon S."/>
            <person name="Teyssier C."/>
        </authorList>
    </citation>
    <scope>NUCLEOTIDE SEQUENCE [GENOMIC DNA]</scope>
    <source>
        <strain>ATCC 14480 / 3D1k22a</strain>
    </source>
</reference>
<sequence length="215" mass="21711">AAIFFAGTPILESAMVYPLAICGACILTSIAGTFFVKLGTNNSIMGALYKGLIATGVFSVAGLAVATYATVGWGTIGTVAGMEITGTNLFFCGLVGLVVTALIVVITEYYTGTNKRPVNSIAQASVTGHGTNVIQGLAVSLESTALPAIVIVGGIIGTYQLGGLFGTGIAVTAMLGLAGMIVALDAFGPVTDNAGGIAEMAGLDPDVRKRPTRWM</sequence>
<organism>
    <name type="scientific">Rhizobium leguminosarum bv. trifolii</name>
    <dbReference type="NCBI Taxonomy" id="386"/>
    <lineage>
        <taxon>Bacteria</taxon>
        <taxon>Pseudomonadati</taxon>
        <taxon>Pseudomonadota</taxon>
        <taxon>Alphaproteobacteria</taxon>
        <taxon>Hyphomicrobiales</taxon>
        <taxon>Rhizobiaceae</taxon>
        <taxon>Rhizobium/Agrobacterium group</taxon>
        <taxon>Rhizobium</taxon>
    </lineage>
</organism>
<evidence type="ECO:0000250" key="1"/>
<evidence type="ECO:0000255" key="2"/>
<evidence type="ECO:0000305" key="3"/>
<comment type="function">
    <text evidence="1">Proton pump that utilizes the energy of pyrophosphate hydrolysis as the driving force for proton movement across the membrane. Generates a proton motive force (By similarity).</text>
</comment>
<comment type="catalytic activity">
    <reaction>
        <text>diphosphate + H2O + H(+)(in) = 2 phosphate + 2 H(+)(out)</text>
        <dbReference type="Rhea" id="RHEA:13973"/>
        <dbReference type="ChEBI" id="CHEBI:15377"/>
        <dbReference type="ChEBI" id="CHEBI:15378"/>
        <dbReference type="ChEBI" id="CHEBI:33019"/>
        <dbReference type="ChEBI" id="CHEBI:43474"/>
        <dbReference type="EC" id="7.1.3.1"/>
    </reaction>
</comment>
<comment type="cofactor">
    <cofactor evidence="1">
        <name>Mg(2+)</name>
        <dbReference type="ChEBI" id="CHEBI:18420"/>
    </cofactor>
</comment>
<comment type="subunit">
    <text evidence="1">Homodimer.</text>
</comment>
<comment type="subcellular location">
    <subcellularLocation>
        <location evidence="1">Cell inner membrane</location>
        <topology evidence="1">Multi-pass membrane protein</topology>
    </subcellularLocation>
</comment>
<comment type="similarity">
    <text evidence="3">Belongs to the H(+)-translocating pyrophosphatase (TC 3.A.10) family.</text>
</comment>
<gene>
    <name type="primary">hppA2</name>
</gene>
<name>HPPA2_RHILT</name>